<name>MUL1_MACFA</name>
<sequence>MENGGRPSLCQFILLGTTSVVTAALYSVYRQKAWVSQELKGAKKVHLGEDLKSILSEAPGKCVPYAVIEGAVRSVKETLNSQFVENCKGVIQRLTLQEHKMVWNRTTHLWNDCSKIIHQRTNTVPFDLVPHEDGVDVAVRVLKPLDSVDLGLEAVYEKFHPSIQSFTDVIGHYISGERPKGIQETEEMLKVGATLTGVGELVLDNNSVRLQPPKQGMQYYLSSQDFDSLLQRQESSVRLWKVLALVFGFATCATLFFILRKQYLQRQERLRLKQMQEEFQEHEAQLLSRAKPEDRESLKSACVVCLSSFKSCVFLECGHVCSCTECYRALPEPKKCPICRQAITRVIPLYNS</sequence>
<protein>
    <recommendedName>
        <fullName>Mitochondrial ubiquitin ligase activator of NFKB 1</fullName>
        <ecNumber>2.3.2.27</ecNumber>
    </recommendedName>
    <alternativeName>
        <fullName>E3 ubiquitin-protein ligase MUL1</fullName>
    </alternativeName>
    <alternativeName>
        <fullName evidence="1">Protein Hades</fullName>
    </alternativeName>
    <alternativeName>
        <fullName evidence="4">RING-type E3 ubiquitin transferase NFKB 1</fullName>
    </alternativeName>
</protein>
<gene>
    <name type="primary">MUL1</name>
    <name type="ORF">QtsA-15365</name>
</gene>
<accession>Q4R7G8</accession>
<keyword id="KW-1017">Isopeptide bond</keyword>
<keyword id="KW-0472">Membrane</keyword>
<keyword id="KW-0479">Metal-binding</keyword>
<keyword id="KW-0496">Mitochondrion</keyword>
<keyword id="KW-1000">Mitochondrion outer membrane</keyword>
<keyword id="KW-0576">Peroxisome</keyword>
<keyword id="KW-1185">Reference proteome</keyword>
<keyword id="KW-0808">Transferase</keyword>
<keyword id="KW-0812">Transmembrane</keyword>
<keyword id="KW-1133">Transmembrane helix</keyword>
<keyword id="KW-0832">Ubl conjugation</keyword>
<keyword id="KW-0833">Ubl conjugation pathway</keyword>
<keyword id="KW-0862">Zinc</keyword>
<keyword id="KW-0863">Zinc-finger</keyword>
<feature type="chain" id="PRO_0000277661" description="Mitochondrial ubiquitin ligase activator of NFKB 1">
    <location>
        <begin position="1"/>
        <end position="352"/>
    </location>
</feature>
<feature type="topological domain" description="Cytoplasmic" evidence="2">
    <location>
        <begin position="1"/>
        <end position="8"/>
    </location>
</feature>
<feature type="transmembrane region" description="Helical" evidence="2">
    <location>
        <begin position="9"/>
        <end position="29"/>
    </location>
</feature>
<feature type="topological domain" description="Mitochondrial intermembrane" evidence="2">
    <location>
        <begin position="30"/>
        <end position="238"/>
    </location>
</feature>
<feature type="transmembrane region" description="Helical" evidence="2">
    <location>
        <begin position="239"/>
        <end position="259"/>
    </location>
</feature>
<feature type="topological domain" description="Cytoplasmic" evidence="2">
    <location>
        <begin position="260"/>
        <end position="352"/>
    </location>
</feature>
<feature type="zinc finger region" description="RING-type" evidence="3">
    <location>
        <begin position="302"/>
        <end position="340"/>
    </location>
</feature>
<feature type="cross-link" description="Glycyl lysine isopeptide (Lys-Gly) (interchain with G-Cter in ubiquitin)" evidence="1">
    <location>
        <position position="52"/>
    </location>
</feature>
<feature type="cross-link" description="Glycyl lysine isopeptide (Lys-Gly) (interchain with G-Cter in ubiquitin)" evidence="1">
    <location>
        <position position="273"/>
    </location>
</feature>
<feature type="cross-link" description="Glycyl lysine isopeptide (Lys-Gly) (interchain with G-Cter in ubiquitin)" evidence="1">
    <location>
        <position position="299"/>
    </location>
</feature>
<evidence type="ECO:0000250" key="1">
    <source>
        <dbReference type="UniProtKB" id="Q969V5"/>
    </source>
</evidence>
<evidence type="ECO:0000255" key="2"/>
<evidence type="ECO:0000255" key="3">
    <source>
        <dbReference type="PROSITE-ProRule" id="PRU00175"/>
    </source>
</evidence>
<evidence type="ECO:0000305" key="4"/>
<organism>
    <name type="scientific">Macaca fascicularis</name>
    <name type="common">Crab-eating macaque</name>
    <name type="synonym">Cynomolgus monkey</name>
    <dbReference type="NCBI Taxonomy" id="9541"/>
    <lineage>
        <taxon>Eukaryota</taxon>
        <taxon>Metazoa</taxon>
        <taxon>Chordata</taxon>
        <taxon>Craniata</taxon>
        <taxon>Vertebrata</taxon>
        <taxon>Euteleostomi</taxon>
        <taxon>Mammalia</taxon>
        <taxon>Eutheria</taxon>
        <taxon>Euarchontoglires</taxon>
        <taxon>Primates</taxon>
        <taxon>Haplorrhini</taxon>
        <taxon>Catarrhini</taxon>
        <taxon>Cercopithecidae</taxon>
        <taxon>Cercopithecinae</taxon>
        <taxon>Macaca</taxon>
    </lineage>
</organism>
<dbReference type="EC" id="2.3.2.27"/>
<dbReference type="EMBL" id="AB168850">
    <property type="protein sequence ID" value="BAE00954.1"/>
    <property type="molecule type" value="mRNA"/>
</dbReference>
<dbReference type="RefSeq" id="NP_001270010.1">
    <property type="nucleotide sequence ID" value="NM_001283081.1"/>
</dbReference>
<dbReference type="SMR" id="Q4R7G8"/>
<dbReference type="STRING" id="9541.ENSMFAP00000036313"/>
<dbReference type="eggNOG" id="KOG1571">
    <property type="taxonomic scope" value="Eukaryota"/>
</dbReference>
<dbReference type="UniPathway" id="UPA00143"/>
<dbReference type="UniPathway" id="UPA00886"/>
<dbReference type="Proteomes" id="UP000233100">
    <property type="component" value="Unplaced"/>
</dbReference>
<dbReference type="GO" id="GO:0005741">
    <property type="term" value="C:mitochondrial outer membrane"/>
    <property type="evidence" value="ECO:0000250"/>
    <property type="project" value="UniProtKB"/>
</dbReference>
<dbReference type="GO" id="GO:0005739">
    <property type="term" value="C:mitochondrion"/>
    <property type="evidence" value="ECO:0000250"/>
    <property type="project" value="UniProtKB"/>
</dbReference>
<dbReference type="GO" id="GO:0005777">
    <property type="term" value="C:peroxisome"/>
    <property type="evidence" value="ECO:0000250"/>
    <property type="project" value="UniProtKB"/>
</dbReference>
<dbReference type="GO" id="GO:0042802">
    <property type="term" value="F:identical protein binding"/>
    <property type="evidence" value="ECO:0000250"/>
    <property type="project" value="UniProtKB"/>
</dbReference>
<dbReference type="GO" id="GO:0002039">
    <property type="term" value="F:p53 binding"/>
    <property type="evidence" value="ECO:0000250"/>
    <property type="project" value="UniProtKB"/>
</dbReference>
<dbReference type="GO" id="GO:0061630">
    <property type="term" value="F:ubiquitin protein ligase activity"/>
    <property type="evidence" value="ECO:0000250"/>
    <property type="project" value="UniProtKB"/>
</dbReference>
<dbReference type="GO" id="GO:0008270">
    <property type="term" value="F:zinc ion binding"/>
    <property type="evidence" value="ECO:0007669"/>
    <property type="project" value="UniProtKB-KW"/>
</dbReference>
<dbReference type="GO" id="GO:0071360">
    <property type="term" value="P:cellular response to exogenous dsRNA"/>
    <property type="evidence" value="ECO:0000250"/>
    <property type="project" value="UniProtKB"/>
</dbReference>
<dbReference type="GO" id="GO:0000266">
    <property type="term" value="P:mitochondrial fission"/>
    <property type="evidence" value="ECO:0000250"/>
    <property type="project" value="UniProtKB"/>
</dbReference>
<dbReference type="GO" id="GO:0051646">
    <property type="term" value="P:mitochondrion localization"/>
    <property type="evidence" value="ECO:0000250"/>
    <property type="project" value="UniProtKB"/>
</dbReference>
<dbReference type="GO" id="GO:0071650">
    <property type="term" value="P:negative regulation of chemokine (C-C motif) ligand 5 production"/>
    <property type="evidence" value="ECO:0000250"/>
    <property type="project" value="UniProtKB"/>
</dbReference>
<dbReference type="GO" id="GO:0050689">
    <property type="term" value="P:negative regulation of defense response to virus by host"/>
    <property type="evidence" value="ECO:0000250"/>
    <property type="project" value="UniProtKB"/>
</dbReference>
<dbReference type="GO" id="GO:0045824">
    <property type="term" value="P:negative regulation of innate immune response"/>
    <property type="evidence" value="ECO:0000250"/>
    <property type="project" value="UniProtKB"/>
</dbReference>
<dbReference type="GO" id="GO:0051898">
    <property type="term" value="P:negative regulation of phosphatidylinositol 3-kinase/protein kinase B signal transduction"/>
    <property type="evidence" value="ECO:0000250"/>
    <property type="project" value="UniProtKB"/>
</dbReference>
<dbReference type="GO" id="GO:0060339">
    <property type="term" value="P:negative regulation of type I interferon-mediated signaling pathway"/>
    <property type="evidence" value="ECO:0000250"/>
    <property type="project" value="UniProtKB"/>
</dbReference>
<dbReference type="GO" id="GO:0043123">
    <property type="term" value="P:positive regulation of canonical NF-kappaB signal transduction"/>
    <property type="evidence" value="ECO:0000250"/>
    <property type="project" value="UniProtKB"/>
</dbReference>
<dbReference type="GO" id="GO:0000209">
    <property type="term" value="P:protein polyubiquitination"/>
    <property type="evidence" value="ECO:0000250"/>
    <property type="project" value="UniProtKB"/>
</dbReference>
<dbReference type="GO" id="GO:0016925">
    <property type="term" value="P:protein sumoylation"/>
    <property type="evidence" value="ECO:0007669"/>
    <property type="project" value="UniProtKB-UniPathway"/>
</dbReference>
<dbReference type="GO" id="GO:0016567">
    <property type="term" value="P:protein ubiquitination"/>
    <property type="evidence" value="ECO:0000250"/>
    <property type="project" value="UniProtKB"/>
</dbReference>
<dbReference type="GO" id="GO:1901028">
    <property type="term" value="P:regulation of mitochondrial outer membrane permeabilization involved in apoptotic signaling pathway"/>
    <property type="evidence" value="ECO:0000250"/>
    <property type="project" value="UniProtKB"/>
</dbReference>
<dbReference type="CDD" id="cd16648">
    <property type="entry name" value="mRING-HC-C3HC5_MAPL"/>
    <property type="match status" value="1"/>
</dbReference>
<dbReference type="FunFam" id="3.30.40.10:FF:000351">
    <property type="entry name" value="Mitochondrial ubiquitin ligase activator of NFKB 1"/>
    <property type="match status" value="1"/>
</dbReference>
<dbReference type="Gene3D" id="3.30.40.10">
    <property type="entry name" value="Zinc/RING finger domain, C3HC4 (zinc finger)"/>
    <property type="match status" value="1"/>
</dbReference>
<dbReference type="InterPro" id="IPR051652">
    <property type="entry name" value="MDM2_MDM4_MUL1"/>
</dbReference>
<dbReference type="InterPro" id="IPR022170">
    <property type="entry name" value="MUL1-like"/>
</dbReference>
<dbReference type="InterPro" id="IPR001841">
    <property type="entry name" value="Znf_RING"/>
</dbReference>
<dbReference type="InterPro" id="IPR013083">
    <property type="entry name" value="Znf_RING/FYVE/PHD"/>
</dbReference>
<dbReference type="PANTHER" id="PTHR12183">
    <property type="entry name" value="MITOCHONDRIAL UBIQUITIN LIGASE ACTIVATOR OF NFKB 1"/>
    <property type="match status" value="1"/>
</dbReference>
<dbReference type="PANTHER" id="PTHR12183:SF4">
    <property type="entry name" value="MITOCHONDRIAL UBIQUITIN LIGASE ACTIVATOR OF NFKB 1"/>
    <property type="match status" value="1"/>
</dbReference>
<dbReference type="Pfam" id="PF12483">
    <property type="entry name" value="GIDE"/>
    <property type="match status" value="1"/>
</dbReference>
<dbReference type="Pfam" id="PF13920">
    <property type="entry name" value="zf-C3HC4_3"/>
    <property type="match status" value="1"/>
</dbReference>
<dbReference type="SUPFAM" id="SSF57850">
    <property type="entry name" value="RING/U-box"/>
    <property type="match status" value="1"/>
</dbReference>
<dbReference type="PROSITE" id="PS50089">
    <property type="entry name" value="ZF_RING_2"/>
    <property type="match status" value="1"/>
</dbReference>
<reference key="1">
    <citation type="submission" date="2006-10" db="EMBL/GenBank/DDBJ databases">
        <title>DNA sequences of macaque genes expressed in brain or testis and its evolutionary implications.</title>
        <authorList>
            <consortium name="International consortium for macaque cDNA sequencing and analysis"/>
        </authorList>
    </citation>
    <scope>NUCLEOTIDE SEQUENCE [LARGE SCALE MRNA]</scope>
    <source>
        <tissue>Testis</tissue>
    </source>
</reference>
<proteinExistence type="evidence at transcript level"/>
<comment type="function">
    <text evidence="1">Exhibits weak E3 ubiquitin-protein ligase activity. E3 ubiquitin ligases accept ubiquitin from an E2 ubiquitin-conjugating enzyme in the form of a thioester and then directly transfer the ubiquitin to targeted substrates. Can ubiquitinate AKT1 preferentially at 'Lys-284' involving 'Lys-48'-linked polyubiquitination and seems to be involved in regulation of Akt signaling by targeting phosphorylated Akt to proteasomal degradation. Mediates polyubiquitination of cytoplasmic TP53 at 'Lys-24' which targets TP53 for proteasomal degradation, thus reducing TP53 levels in the cytoplasm and mitochondrion. Proposed to preferentially act as a SUMO E3 ligase at physiological concentrations. Plays a role in the control of mitochondrial morphology by promoting mitochondrial fragmentation, and influences mitochondrial localization. Likely to promote mitochondrial fission through negatively regulating the mitochondrial fusion proteins MFN1 and MFN2, acting in a pathway that is parallel to the PRKN/PINK1 regulatory pathway. May also be involved in the sumoylation of the membrane fission protein DNM1L. Inhibits cell growth. When overexpressed, activates JNK through MAP3K7/TAK1 and induces caspase-dependent apoptosis. Involved in the modulation of innate immune defense against viruses by inhibiting RIGI-dependent antiviral response (By similarity). Can mediate RIGI sumoylation and disrupt its polyubiquitination (By similarity).</text>
</comment>
<comment type="catalytic activity">
    <reaction evidence="1">
        <text>S-ubiquitinyl-[E2 ubiquitin-conjugating enzyme]-L-cysteine + [acceptor protein]-L-lysine = [E2 ubiquitin-conjugating enzyme]-L-cysteine + N(6)-ubiquitinyl-[acceptor protein]-L-lysine.</text>
        <dbReference type="EC" id="2.3.2.27"/>
    </reaction>
</comment>
<comment type="pathway">
    <text evidence="1">Protein modification; protein ubiquitination.</text>
</comment>
<comment type="pathway">
    <text evidence="1">Protein modification; protein sumoylation.</text>
</comment>
<comment type="subunit">
    <text evidence="1">Homooligomer. Interacts with MAP3K7/TAK1. Interacts with UBC9. Interacts with and sumoylates DNM1L. Interacts with MAVS. Interacts with TP53 (via N-terminus); the interaction leads to ubiquitination and proteasomal degradation of TP53.</text>
</comment>
<comment type="subcellular location">
    <subcellularLocation>
        <location evidence="1">Mitochondrion outer membrane</location>
        <topology evidence="2">Multi-pass membrane protein</topology>
    </subcellularLocation>
    <subcellularLocation>
        <location evidence="1">Peroxisome</location>
    </subcellularLocation>
    <text evidence="1">Transported in mitochondrion-derived vesicles from the mitochondrion to the peroxisome.</text>
</comment>
<comment type="domain">
    <text evidence="1">The zinc finger domain is required for E3 ligase activity.</text>
</comment>
<comment type="PTM">
    <text evidence="1">Ubiquitinated by PRKN during mitophagy, leading to its degradation and enhancement of mitophagy. Deubiquitinated by USP30.</text>
</comment>